<dbReference type="EMBL" id="U17989">
    <property type="protein sequence ID" value="AAB81551.1"/>
    <property type="molecule type" value="mRNA"/>
</dbReference>
<dbReference type="EMBL" id="AK314041">
    <property type="protein sequence ID" value="BAG36750.1"/>
    <property type="molecule type" value="mRNA"/>
</dbReference>
<dbReference type="EMBL" id="AL049830">
    <property type="status" value="NOT_ANNOTATED_CDS"/>
    <property type="molecule type" value="Genomic_DNA"/>
</dbReference>
<dbReference type="EMBL" id="BC132673">
    <property type="protein sequence ID" value="AAI32674.1"/>
    <property type="molecule type" value="mRNA"/>
</dbReference>
<dbReference type="EMBL" id="AF243424">
    <property type="protein sequence ID" value="AAF81201.1"/>
    <property type="molecule type" value="mRNA"/>
</dbReference>
<dbReference type="CCDS" id="CCDS41938.1">
    <molecule id="Q13033-1"/>
</dbReference>
<dbReference type="CCDS" id="CCDS9641.1">
    <molecule id="Q13033-2"/>
</dbReference>
<dbReference type="PIR" id="JC2522">
    <property type="entry name" value="JC2522"/>
</dbReference>
<dbReference type="RefSeq" id="NP_001077362.1">
    <molecule id="Q13033-1"/>
    <property type="nucleotide sequence ID" value="NM_001083893.2"/>
</dbReference>
<dbReference type="RefSeq" id="NP_055389.3">
    <molecule id="Q13033-2"/>
    <property type="nucleotide sequence ID" value="NM_014574.3"/>
</dbReference>
<dbReference type="PDB" id="4N6J">
    <property type="method" value="X-ray"/>
    <property type="resolution" value="2.00 A"/>
    <property type="chains" value="A/B=86-131"/>
</dbReference>
<dbReference type="PDB" id="6AKL">
    <property type="method" value="X-ray"/>
    <property type="resolution" value="1.75 A"/>
    <property type="chains" value="C=165-190"/>
</dbReference>
<dbReference type="PDB" id="6IUR">
    <property type="method" value="X-ray"/>
    <property type="resolution" value="3.33 A"/>
    <property type="chains" value="C/D/G/H=86-131"/>
</dbReference>
<dbReference type="PDB" id="7K36">
    <property type="method" value="EM"/>
    <property type="resolution" value="3.30 A"/>
    <property type="chains" value="B/D/E/F/G=1-797"/>
</dbReference>
<dbReference type="PDBsum" id="4N6J"/>
<dbReference type="PDBsum" id="6AKL"/>
<dbReference type="PDBsum" id="6IUR"/>
<dbReference type="PDBsum" id="7K36"/>
<dbReference type="EMDB" id="EMD-22650"/>
<dbReference type="SMR" id="Q13033"/>
<dbReference type="BioGRID" id="118999">
    <property type="interactions" value="157"/>
</dbReference>
<dbReference type="ComplexPortal" id="CPX-2236">
    <property type="entry name" value="STRIPAK complex, STRIP1-STRN3 variant"/>
</dbReference>
<dbReference type="ComplexPortal" id="CPX-8601">
    <property type="entry name" value="STRIPAK complex, STRIP2-STRN3 variant"/>
</dbReference>
<dbReference type="CORUM" id="Q13033"/>
<dbReference type="FunCoup" id="Q13033">
    <property type="interactions" value="1974"/>
</dbReference>
<dbReference type="IntAct" id="Q13033">
    <property type="interactions" value="115"/>
</dbReference>
<dbReference type="MINT" id="Q13033"/>
<dbReference type="STRING" id="9606.ENSP00000350071"/>
<dbReference type="GlyGen" id="Q13033">
    <property type="glycosylation" value="3 sites, 1 N-linked glycan (1 site), 1 O-linked glycan (1 site)"/>
</dbReference>
<dbReference type="iPTMnet" id="Q13033"/>
<dbReference type="PhosphoSitePlus" id="Q13033"/>
<dbReference type="BioMuta" id="STRN3"/>
<dbReference type="DMDM" id="223634717"/>
<dbReference type="jPOST" id="Q13033"/>
<dbReference type="MassIVE" id="Q13033"/>
<dbReference type="PaxDb" id="9606-ENSP00000350071"/>
<dbReference type="PeptideAtlas" id="Q13033"/>
<dbReference type="ProteomicsDB" id="59114">
    <molecule id="Q13033-1"/>
</dbReference>
<dbReference type="ProteomicsDB" id="59115">
    <molecule id="Q13033-2"/>
</dbReference>
<dbReference type="Pumba" id="Q13033"/>
<dbReference type="Antibodypedia" id="176">
    <property type="antibodies" value="129 antibodies from 23 providers"/>
</dbReference>
<dbReference type="DNASU" id="29966"/>
<dbReference type="Ensembl" id="ENST00000355683.9">
    <molecule id="Q13033-2"/>
    <property type="protein sequence ID" value="ENSP00000347909.5"/>
    <property type="gene ID" value="ENSG00000196792.12"/>
</dbReference>
<dbReference type="Ensembl" id="ENST00000357479.10">
    <molecule id="Q13033-1"/>
    <property type="protein sequence ID" value="ENSP00000350071.5"/>
    <property type="gene ID" value="ENSG00000196792.12"/>
</dbReference>
<dbReference type="GeneID" id="29966"/>
<dbReference type="KEGG" id="hsa:29966"/>
<dbReference type="MANE-Select" id="ENST00000357479.10">
    <property type="protein sequence ID" value="ENSP00000350071.5"/>
    <property type="RefSeq nucleotide sequence ID" value="NM_001083893.2"/>
    <property type="RefSeq protein sequence ID" value="NP_001077362.1"/>
</dbReference>
<dbReference type="UCSC" id="uc001wqu.3">
    <molecule id="Q13033-1"/>
    <property type="organism name" value="human"/>
</dbReference>
<dbReference type="AGR" id="HGNC:15720"/>
<dbReference type="CTD" id="29966"/>
<dbReference type="DisGeNET" id="29966"/>
<dbReference type="GeneCards" id="STRN3"/>
<dbReference type="HGNC" id="HGNC:15720">
    <property type="gene designation" value="STRN3"/>
</dbReference>
<dbReference type="HPA" id="ENSG00000196792">
    <property type="expression patterns" value="Low tissue specificity"/>
</dbReference>
<dbReference type="MIM" id="614766">
    <property type="type" value="gene"/>
</dbReference>
<dbReference type="neXtProt" id="NX_Q13033"/>
<dbReference type="OpenTargets" id="ENSG00000196792"/>
<dbReference type="PharmGKB" id="PA38394"/>
<dbReference type="VEuPathDB" id="HostDB:ENSG00000196792"/>
<dbReference type="eggNOG" id="KOG0642">
    <property type="taxonomic scope" value="Eukaryota"/>
</dbReference>
<dbReference type="GeneTree" id="ENSGT00950000183095"/>
<dbReference type="HOGENOM" id="CLU_009108_2_0_1"/>
<dbReference type="InParanoid" id="Q13033"/>
<dbReference type="OMA" id="SKCSQEV"/>
<dbReference type="OrthoDB" id="727118at2759"/>
<dbReference type="PAN-GO" id="Q13033">
    <property type="GO annotations" value="5 GO annotations based on evolutionary models"/>
</dbReference>
<dbReference type="PhylomeDB" id="Q13033"/>
<dbReference type="TreeFam" id="TF313387"/>
<dbReference type="PathwayCommons" id="Q13033"/>
<dbReference type="SignaLink" id="Q13033"/>
<dbReference type="BioGRID-ORCS" id="29966">
    <property type="hits" value="17 hits in 1156 CRISPR screens"/>
</dbReference>
<dbReference type="ChiTaRS" id="STRN3">
    <property type="organism name" value="human"/>
</dbReference>
<dbReference type="EvolutionaryTrace" id="Q13033"/>
<dbReference type="GeneWiki" id="STRN3"/>
<dbReference type="GenomeRNAi" id="29966"/>
<dbReference type="Pharos" id="Q13033">
    <property type="development level" value="Tbio"/>
</dbReference>
<dbReference type="PRO" id="PR:Q13033"/>
<dbReference type="Proteomes" id="UP000005640">
    <property type="component" value="Chromosome 14"/>
</dbReference>
<dbReference type="RNAct" id="Q13033">
    <property type="molecule type" value="protein"/>
</dbReference>
<dbReference type="Bgee" id="ENSG00000196792">
    <property type="expression patterns" value="Expressed in calcaneal tendon and 209 other cell types or tissues"/>
</dbReference>
<dbReference type="ExpressionAtlas" id="Q13033">
    <property type="expression patterns" value="baseline and differential"/>
</dbReference>
<dbReference type="GO" id="GO:0005737">
    <property type="term" value="C:cytoplasm"/>
    <property type="evidence" value="ECO:0000314"/>
    <property type="project" value="UniProtKB"/>
</dbReference>
<dbReference type="GO" id="GO:0030425">
    <property type="term" value="C:dendrite"/>
    <property type="evidence" value="ECO:0000250"/>
    <property type="project" value="UniProtKB"/>
</dbReference>
<dbReference type="GO" id="GO:0090443">
    <property type="term" value="C:FAR/SIN/STRIPAK complex"/>
    <property type="evidence" value="ECO:0000314"/>
    <property type="project" value="UniProtKB"/>
</dbReference>
<dbReference type="GO" id="GO:0005794">
    <property type="term" value="C:Golgi apparatus"/>
    <property type="evidence" value="ECO:0000314"/>
    <property type="project" value="UniProtKB"/>
</dbReference>
<dbReference type="GO" id="GO:0043025">
    <property type="term" value="C:neuronal cell body"/>
    <property type="evidence" value="ECO:0000250"/>
    <property type="project" value="UniProtKB"/>
</dbReference>
<dbReference type="GO" id="GO:0005654">
    <property type="term" value="C:nucleoplasm"/>
    <property type="evidence" value="ECO:0000314"/>
    <property type="project" value="UniProtKB"/>
</dbReference>
<dbReference type="GO" id="GO:0005634">
    <property type="term" value="C:nucleus"/>
    <property type="evidence" value="ECO:0000314"/>
    <property type="project" value="UniProtKB"/>
</dbReference>
<dbReference type="GO" id="GO:0005886">
    <property type="term" value="C:plasma membrane"/>
    <property type="evidence" value="ECO:0000314"/>
    <property type="project" value="UniProtKB"/>
</dbReference>
<dbReference type="GO" id="GO:0098794">
    <property type="term" value="C:postsynapse"/>
    <property type="evidence" value="ECO:0007669"/>
    <property type="project" value="Ensembl"/>
</dbReference>
<dbReference type="GO" id="GO:0032991">
    <property type="term" value="C:protein-containing complex"/>
    <property type="evidence" value="ECO:0000250"/>
    <property type="project" value="UniProtKB"/>
</dbReference>
<dbReference type="GO" id="GO:0070016">
    <property type="term" value="F:armadillo repeat domain binding"/>
    <property type="evidence" value="ECO:0000353"/>
    <property type="project" value="UniProtKB"/>
</dbReference>
<dbReference type="GO" id="GO:0005516">
    <property type="term" value="F:calmodulin binding"/>
    <property type="evidence" value="ECO:0000318"/>
    <property type="project" value="GO_Central"/>
</dbReference>
<dbReference type="GO" id="GO:0051721">
    <property type="term" value="F:protein phosphatase 2A binding"/>
    <property type="evidence" value="ECO:0000314"/>
    <property type="project" value="UniProtKB"/>
</dbReference>
<dbReference type="GO" id="GO:0044877">
    <property type="term" value="F:protein-containing complex binding"/>
    <property type="evidence" value="ECO:0000314"/>
    <property type="project" value="UniProtKB"/>
</dbReference>
<dbReference type="GO" id="GO:0030674">
    <property type="term" value="F:protein-macromolecule adaptor activity"/>
    <property type="evidence" value="ECO:0000314"/>
    <property type="project" value="UniProtKB"/>
</dbReference>
<dbReference type="GO" id="GO:0031267">
    <property type="term" value="F:small GTPase binding"/>
    <property type="evidence" value="ECO:0000353"/>
    <property type="project" value="UniProtKB"/>
</dbReference>
<dbReference type="GO" id="GO:0045892">
    <property type="term" value="P:negative regulation of DNA-templated transcription"/>
    <property type="evidence" value="ECO:0000314"/>
    <property type="project" value="UniProtKB"/>
</dbReference>
<dbReference type="GO" id="GO:0035331">
    <property type="term" value="P:negative regulation of hippo signaling"/>
    <property type="evidence" value="ECO:0000314"/>
    <property type="project" value="UniProtKB"/>
</dbReference>
<dbReference type="GO" id="GO:0033147">
    <property type="term" value="P:negative regulation of intracellular estrogen receptor signaling pathway"/>
    <property type="evidence" value="ECO:0000250"/>
    <property type="project" value="UniProtKB"/>
</dbReference>
<dbReference type="GO" id="GO:0000122">
    <property type="term" value="P:negative regulation of transcription by RNA polymerase II"/>
    <property type="evidence" value="ECO:0000314"/>
    <property type="project" value="UniProtKB"/>
</dbReference>
<dbReference type="GO" id="GO:0045944">
    <property type="term" value="P:positive regulation of transcription by RNA polymerase II"/>
    <property type="evidence" value="ECO:0000314"/>
    <property type="project" value="UniProtKB"/>
</dbReference>
<dbReference type="GO" id="GO:0032355">
    <property type="term" value="P:response to estradiol"/>
    <property type="evidence" value="ECO:0000250"/>
    <property type="project" value="UniProtKB"/>
</dbReference>
<dbReference type="CDD" id="cd00200">
    <property type="entry name" value="WD40"/>
    <property type="match status" value="1"/>
</dbReference>
<dbReference type="FunFam" id="1.20.5.300:FF:000001">
    <property type="entry name" value="striatin isoform X1"/>
    <property type="match status" value="1"/>
</dbReference>
<dbReference type="FunFam" id="2.130.10.10:FF:000616">
    <property type="entry name" value="Striatin-3 isoform B"/>
    <property type="match status" value="1"/>
</dbReference>
<dbReference type="FunFam" id="2.130.10.10:FF:000110">
    <property type="entry name" value="striatin-3 isoform X2"/>
    <property type="match status" value="1"/>
</dbReference>
<dbReference type="FunFam" id="2.130.10.10:FF:000134">
    <property type="entry name" value="striatin-3 isoform X2"/>
    <property type="match status" value="1"/>
</dbReference>
<dbReference type="Gene3D" id="1.20.5.300">
    <property type="match status" value="1"/>
</dbReference>
<dbReference type="Gene3D" id="2.130.10.10">
    <property type="entry name" value="YVTN repeat-like/Quinoprotein amine dehydrogenase"/>
    <property type="match status" value="3"/>
</dbReference>
<dbReference type="InterPro" id="IPR020472">
    <property type="entry name" value="G-protein_beta_WD-40_rep"/>
</dbReference>
<dbReference type="InterPro" id="IPR013258">
    <property type="entry name" value="Striatin_N"/>
</dbReference>
<dbReference type="InterPro" id="IPR015943">
    <property type="entry name" value="WD40/YVTN_repeat-like_dom_sf"/>
</dbReference>
<dbReference type="InterPro" id="IPR019775">
    <property type="entry name" value="WD40_repeat_CS"/>
</dbReference>
<dbReference type="InterPro" id="IPR036322">
    <property type="entry name" value="WD40_repeat_dom_sf"/>
</dbReference>
<dbReference type="InterPro" id="IPR001680">
    <property type="entry name" value="WD40_rpt"/>
</dbReference>
<dbReference type="InterPro" id="IPR051488">
    <property type="entry name" value="WD_repeat_striatin"/>
</dbReference>
<dbReference type="PANTHER" id="PTHR15653">
    <property type="entry name" value="STRIATIN"/>
    <property type="match status" value="1"/>
</dbReference>
<dbReference type="PANTHER" id="PTHR15653:SF3">
    <property type="entry name" value="STRIATIN-3"/>
    <property type="match status" value="1"/>
</dbReference>
<dbReference type="Pfam" id="PF08232">
    <property type="entry name" value="Striatin"/>
    <property type="match status" value="1"/>
</dbReference>
<dbReference type="Pfam" id="PF00400">
    <property type="entry name" value="WD40"/>
    <property type="match status" value="5"/>
</dbReference>
<dbReference type="PRINTS" id="PR00320">
    <property type="entry name" value="GPROTEINBRPT"/>
</dbReference>
<dbReference type="SMART" id="SM00320">
    <property type="entry name" value="WD40"/>
    <property type="match status" value="7"/>
</dbReference>
<dbReference type="SUPFAM" id="SSF50978">
    <property type="entry name" value="WD40 repeat-like"/>
    <property type="match status" value="1"/>
</dbReference>
<dbReference type="PROSITE" id="PS00678">
    <property type="entry name" value="WD_REPEATS_1"/>
    <property type="match status" value="2"/>
</dbReference>
<dbReference type="PROSITE" id="PS50082">
    <property type="entry name" value="WD_REPEATS_2"/>
    <property type="match status" value="4"/>
</dbReference>
<dbReference type="PROSITE" id="PS50294">
    <property type="entry name" value="WD_REPEATS_REGION"/>
    <property type="match status" value="1"/>
</dbReference>
<feature type="chain" id="PRO_0000051236" description="Striatin-3">
    <location>
        <begin position="1"/>
        <end position="797"/>
    </location>
</feature>
<feature type="repeat" description="WD 1" evidence="4">
    <location>
        <begin position="478"/>
        <end position="517"/>
    </location>
</feature>
<feature type="repeat" description="WD 2" evidence="4">
    <location>
        <begin position="531"/>
        <end position="570"/>
    </location>
</feature>
<feature type="repeat" description="WD 3" evidence="4">
    <location>
        <begin position="584"/>
        <end position="623"/>
    </location>
</feature>
<feature type="repeat" description="WD 4" evidence="4">
    <location>
        <begin position="679"/>
        <end position="718"/>
    </location>
</feature>
<feature type="repeat" description="WD 5" evidence="4">
    <location>
        <begin position="721"/>
        <end position="760"/>
    </location>
</feature>
<feature type="repeat" description="WD 6" evidence="4">
    <location>
        <begin position="767"/>
        <end position="797"/>
    </location>
</feature>
<feature type="region of interest" description="Disordered" evidence="5">
    <location>
        <begin position="1"/>
        <end position="60"/>
    </location>
</feature>
<feature type="region of interest" description="Caveolin-binding" evidence="4">
    <location>
        <begin position="71"/>
        <end position="79"/>
    </location>
</feature>
<feature type="region of interest" description="Calmodulin-binding" evidence="4">
    <location>
        <begin position="166"/>
        <end position="183"/>
    </location>
</feature>
<feature type="region of interest" description="Disordered" evidence="5">
    <location>
        <begin position="224"/>
        <end position="278"/>
    </location>
</feature>
<feature type="region of interest" description="Disordered" evidence="5">
    <location>
        <begin position="313"/>
        <end position="338"/>
    </location>
</feature>
<feature type="coiled-coil region" evidence="4">
    <location>
        <begin position="77"/>
        <end position="136"/>
    </location>
</feature>
<feature type="compositionally biased region" description="Gly residues" evidence="5">
    <location>
        <begin position="1"/>
        <end position="13"/>
    </location>
</feature>
<feature type="compositionally biased region" description="Gly residues" evidence="5">
    <location>
        <begin position="23"/>
        <end position="43"/>
    </location>
</feature>
<feature type="compositionally biased region" description="Low complexity" evidence="5">
    <location>
        <begin position="44"/>
        <end position="56"/>
    </location>
</feature>
<feature type="compositionally biased region" description="Basic and acidic residues" evidence="5">
    <location>
        <begin position="230"/>
        <end position="241"/>
    </location>
</feature>
<feature type="compositionally biased region" description="Acidic residues" evidence="5">
    <location>
        <begin position="253"/>
        <end position="265"/>
    </location>
</feature>
<feature type="modified residue" description="N-acetylmethionine" evidence="27 28">
    <location>
        <position position="1"/>
    </location>
</feature>
<feature type="modified residue" description="Phosphothreonine" evidence="2">
    <location>
        <position position="150"/>
    </location>
</feature>
<feature type="modified residue" description="Phosphoserine" evidence="3">
    <location>
        <position position="202"/>
    </location>
</feature>
<feature type="modified residue" description="Phosphoserine" evidence="29">
    <location>
        <position position="214"/>
    </location>
</feature>
<feature type="modified residue" description="Phosphoserine" evidence="22 24 25 26 29">
    <location>
        <position position="229"/>
    </location>
</feature>
<feature type="modified residue" description="Phosphoserine" evidence="23 24 30">
    <location>
        <position position="257"/>
    </location>
</feature>
<feature type="modified residue" description="Phosphoserine" evidence="3">
    <location>
        <position position="335"/>
    </location>
</feature>
<feature type="splice variant" id="VSP_006786" description="In isoform Alpha." evidence="12 13 14">
    <location>
        <begin position="330"/>
        <end position="413"/>
    </location>
</feature>
<feature type="sequence variant" id="VAR_054337" description="In dbSNP:rs2273171." evidence="6 11">
    <original>N</original>
    <variation>S</variation>
    <location>
        <position position="471"/>
    </location>
</feature>
<feature type="mutagenesis site" description="Loss of STRIPAK complex formation." evidence="9">
    <original>RQLLRQYLQE</original>
    <variation>AQLLRQYLQA</variation>
    <location>
        <begin position="176"/>
        <end position="185"/>
    </location>
</feature>
<feature type="mutagenesis site" description="Loss of STRIPAK complex formation." evidence="9">
    <original>LRQYLQEV</original>
    <variation>DRQYLQED</variation>
    <location>
        <begin position="179"/>
        <end position="186"/>
    </location>
</feature>
<feature type="mutagenesis site" description="Decreased interaction with other components of STRIPAK core complex." evidence="10">
    <original>R</original>
    <variation>E</variation>
    <location>
        <position position="530"/>
    </location>
</feature>
<feature type="sequence conflict" description="In Ref. 1; AAB81551." evidence="15" ref="1">
    <original>Y</original>
    <variation>N</variation>
    <location>
        <position position="63"/>
    </location>
</feature>
<feature type="helix" evidence="31">
    <location>
        <begin position="86"/>
        <end position="129"/>
    </location>
</feature>
<feature type="helix" evidence="32">
    <location>
        <begin position="175"/>
        <end position="185"/>
    </location>
</feature>
<feature type="strand" evidence="33">
    <location>
        <begin position="471"/>
        <end position="476"/>
    </location>
</feature>
<feature type="strand" evidence="33">
    <location>
        <begin position="485"/>
        <end position="488"/>
    </location>
</feature>
<feature type="strand" evidence="33">
    <location>
        <begin position="490"/>
        <end position="498"/>
    </location>
</feature>
<feature type="strand" evidence="33">
    <location>
        <begin position="500"/>
        <end position="502"/>
    </location>
</feature>
<feature type="strand" evidence="33">
    <location>
        <begin position="504"/>
        <end position="508"/>
    </location>
</feature>
<feature type="strand" evidence="33">
    <location>
        <begin position="526"/>
        <end position="528"/>
    </location>
</feature>
<feature type="strand" evidence="33">
    <location>
        <begin position="538"/>
        <end position="541"/>
    </location>
</feature>
<feature type="strand" evidence="33">
    <location>
        <begin position="545"/>
        <end position="551"/>
    </location>
</feature>
<feature type="strand" evidence="33">
    <location>
        <begin position="555"/>
        <end position="561"/>
    </location>
</feature>
<feature type="strand" evidence="33">
    <location>
        <begin position="569"/>
        <end position="571"/>
    </location>
</feature>
<feature type="helix" evidence="33">
    <location>
        <begin position="575"/>
        <end position="577"/>
    </location>
</feature>
<feature type="strand" evidence="33">
    <location>
        <begin position="578"/>
        <end position="583"/>
    </location>
</feature>
<feature type="strand" evidence="33">
    <location>
        <begin position="589"/>
        <end position="594"/>
    </location>
</feature>
<feature type="strand" evidence="33">
    <location>
        <begin position="601"/>
        <end position="605"/>
    </location>
</feature>
<feature type="strand" evidence="33">
    <location>
        <begin position="610"/>
        <end position="613"/>
    </location>
</feature>
<feature type="strand" evidence="33">
    <location>
        <begin position="623"/>
        <end position="625"/>
    </location>
</feature>
<feature type="strand" evidence="33">
    <location>
        <begin position="637"/>
        <end position="639"/>
    </location>
</feature>
<feature type="strand" evidence="33">
    <location>
        <begin position="647"/>
        <end position="650"/>
    </location>
</feature>
<feature type="strand" evidence="33">
    <location>
        <begin position="652"/>
        <end position="654"/>
    </location>
</feature>
<feature type="strand" evidence="33">
    <location>
        <begin position="656"/>
        <end position="659"/>
    </location>
</feature>
<feature type="strand" evidence="33">
    <location>
        <begin position="661"/>
        <end position="663"/>
    </location>
</feature>
<feature type="strand" evidence="33">
    <location>
        <begin position="668"/>
        <end position="670"/>
    </location>
</feature>
<feature type="strand" evidence="33">
    <location>
        <begin position="684"/>
        <end position="689"/>
    </location>
</feature>
<feature type="strand" evidence="33">
    <location>
        <begin position="691"/>
        <end position="700"/>
    </location>
</feature>
<feature type="strand" evidence="33">
    <location>
        <begin position="703"/>
        <end position="709"/>
    </location>
</feature>
<feature type="turn" evidence="33">
    <location>
        <begin position="710"/>
        <end position="712"/>
    </location>
</feature>
<feature type="strand" evidence="33">
    <location>
        <begin position="717"/>
        <end position="720"/>
    </location>
</feature>
<feature type="strand" evidence="33">
    <location>
        <begin position="726"/>
        <end position="731"/>
    </location>
</feature>
<feature type="strand" evidence="33">
    <location>
        <begin position="735"/>
        <end position="742"/>
    </location>
</feature>
<feature type="turn" evidence="33">
    <location>
        <begin position="743"/>
        <end position="745"/>
    </location>
</feature>
<feature type="strand" evidence="33">
    <location>
        <begin position="747"/>
        <end position="753"/>
    </location>
</feature>
<feature type="strand" evidence="33">
    <location>
        <begin position="758"/>
        <end position="761"/>
    </location>
</feature>
<feature type="strand" evidence="33">
    <location>
        <begin position="774"/>
        <end position="777"/>
    </location>
</feature>
<feature type="strand" evidence="33">
    <location>
        <begin position="779"/>
        <end position="781"/>
    </location>
</feature>
<feature type="strand" evidence="33">
    <location>
        <begin position="784"/>
        <end position="787"/>
    </location>
</feature>
<feature type="strand" evidence="33">
    <location>
        <begin position="793"/>
        <end position="797"/>
    </location>
</feature>
<organism>
    <name type="scientific">Homo sapiens</name>
    <name type="common">Human</name>
    <dbReference type="NCBI Taxonomy" id="9606"/>
    <lineage>
        <taxon>Eukaryota</taxon>
        <taxon>Metazoa</taxon>
        <taxon>Chordata</taxon>
        <taxon>Craniata</taxon>
        <taxon>Vertebrata</taxon>
        <taxon>Euteleostomi</taxon>
        <taxon>Mammalia</taxon>
        <taxon>Eutheria</taxon>
        <taxon>Euarchontoglires</taxon>
        <taxon>Primates</taxon>
        <taxon>Haplorrhini</taxon>
        <taxon>Catarrhini</taxon>
        <taxon>Hominidae</taxon>
        <taxon>Homo</taxon>
    </lineage>
</organism>
<sequence>MDELAGGGGGGPGMAAPPRQQQGPGGNLGLSPGGNGAAGGGGPPASEGAGPAAGPELSRPQQYTIPGILHYIQHEWARFEMERAHWEVERAELQARIAFLQGERKGQENLKKDLVRRIKMLEYALKQERAKYHKLKYGTELNQGDLKMPTFESEETKDTEAPTAPQNSQLTWKQGRQLLRQYLQEVGYTDTILDVRSQRVRSLLGLSNSEPNGSVETKNLEQILNGGESPKQKGQEIKRSSGDVLETFNFLENADDSDEDEENDMIEGIPEGKDKHRMNKHKIGNEGLAADLTDDPDTEEALKEFDFLVTAEDGEGAGEARSSGDGTEWDKDDLSPTAEVWDVDQGLISKLKEQYKKERKGKKGVKRANRTKLYDMIADLGDDELPHIPSGIINQSRSASTRMTDHEGARAEEAEPITFPSGGGKSFIMGSDDVLLSVLGLGDLADLTVTNDADYSYDLPANKDAFRKTWNPKYTLRSHFDGVRALAFHPVEPVLVTASEDHTLKLWNLQKTVPAKKSASLDVEPIYTFRAHIGPVLSLAISSNGEQCFSGGIDATIQWWNMPSPSVDPYDTYEPNVLAGTLVGHTDAVWGLAYSGIKNQLLSCSADGTVRLWNPQEKLPCICTYNGDKKHGIPTSVDFIGCDPAHMVTSFNTGSAVIYDLETSQSLVILSSQVDSGLQSNNHINRVVSHPTLPVTITAHEDRHIKFFDNKTGKMIHSMVAHLDAVTSLAVDPNGIYLMSGSHDCSIRLWNLDSKTCVQEITAHRKKLDESIYDVAFHSSKAYIASAGADALAKVFV</sequence>
<keyword id="KW-0002">3D-structure</keyword>
<keyword id="KW-0007">Acetylation</keyword>
<keyword id="KW-0025">Alternative splicing</keyword>
<keyword id="KW-0112">Calmodulin-binding</keyword>
<keyword id="KW-0175">Coiled coil</keyword>
<keyword id="KW-0963">Cytoplasm</keyword>
<keyword id="KW-0472">Membrane</keyword>
<keyword id="KW-0597">Phosphoprotein</keyword>
<keyword id="KW-1267">Proteomics identification</keyword>
<keyword id="KW-1185">Reference proteome</keyword>
<keyword id="KW-0677">Repeat</keyword>
<keyword id="KW-0853">WD repeat</keyword>
<evidence type="ECO:0000250" key="1"/>
<evidence type="ECO:0000250" key="2">
    <source>
        <dbReference type="UniProtKB" id="P58405"/>
    </source>
</evidence>
<evidence type="ECO:0000250" key="3">
    <source>
        <dbReference type="UniProtKB" id="Q9ERG2"/>
    </source>
</evidence>
<evidence type="ECO:0000255" key="4"/>
<evidence type="ECO:0000256" key="5">
    <source>
        <dbReference type="SAM" id="MobiDB-lite"/>
    </source>
</evidence>
<evidence type="ECO:0000269" key="6">
    <source>
    </source>
</evidence>
<evidence type="ECO:0000269" key="7">
    <source>
    </source>
</evidence>
<evidence type="ECO:0000269" key="8">
    <source>
    </source>
</evidence>
<evidence type="ECO:0000269" key="9">
    <source>
    </source>
</evidence>
<evidence type="ECO:0000269" key="10">
    <source>
    </source>
</evidence>
<evidence type="ECO:0000269" key="11">
    <source>
    </source>
</evidence>
<evidence type="ECO:0000303" key="12">
    <source>
    </source>
</evidence>
<evidence type="ECO:0000303" key="13">
    <source>
    </source>
</evidence>
<evidence type="ECO:0000303" key="14">
    <source>
    </source>
</evidence>
<evidence type="ECO:0000305" key="15"/>
<evidence type="ECO:0000305" key="16">
    <source>
    </source>
</evidence>
<evidence type="ECO:0000305" key="17">
    <source>
    </source>
</evidence>
<evidence type="ECO:0000305" key="18">
    <source>
    </source>
</evidence>
<evidence type="ECO:0000312" key="19">
    <source>
        <dbReference type="HGNC" id="HGNC:15720"/>
    </source>
</evidence>
<evidence type="ECO:0007744" key="20">
    <source>
        <dbReference type="PDB" id="6AKL"/>
    </source>
</evidence>
<evidence type="ECO:0007744" key="21">
    <source>
        <dbReference type="PDB" id="7K36"/>
    </source>
</evidence>
<evidence type="ECO:0007744" key="22">
    <source>
    </source>
</evidence>
<evidence type="ECO:0007744" key="23">
    <source>
    </source>
</evidence>
<evidence type="ECO:0007744" key="24">
    <source>
    </source>
</evidence>
<evidence type="ECO:0007744" key="25">
    <source>
    </source>
</evidence>
<evidence type="ECO:0007744" key="26">
    <source>
    </source>
</evidence>
<evidence type="ECO:0007744" key="27">
    <source>
    </source>
</evidence>
<evidence type="ECO:0007744" key="28">
    <source>
    </source>
</evidence>
<evidence type="ECO:0007744" key="29">
    <source>
    </source>
</evidence>
<evidence type="ECO:0007744" key="30">
    <source>
    </source>
</evidence>
<evidence type="ECO:0007829" key="31">
    <source>
        <dbReference type="PDB" id="4N6J"/>
    </source>
</evidence>
<evidence type="ECO:0007829" key="32">
    <source>
        <dbReference type="PDB" id="6AKL"/>
    </source>
</evidence>
<evidence type="ECO:0007829" key="33">
    <source>
        <dbReference type="PDB" id="7K36"/>
    </source>
</evidence>
<gene>
    <name evidence="19" type="primary">STRN3</name>
    <name type="synonym">GS2NA</name>
    <name type="synonym">SG2NA</name>
</gene>
<protein>
    <recommendedName>
        <fullName>Striatin-3</fullName>
    </recommendedName>
    <alternativeName>
        <fullName>Cell cycle autoantigen SG2NA</fullName>
    </alternativeName>
    <alternativeName>
        <fullName>S/G2 antigen</fullName>
    </alternativeName>
</protein>
<accession>Q13033</accession>
<accession>A2RTX7</accession>
<accession>A6NHZ7</accession>
<accession>Q9NRA5</accession>
<proteinExistence type="evidence at protein level"/>
<name>STRN3_HUMAN</name>
<comment type="function">
    <text evidence="7 9 10 17">Calmodulin-binding scaffolding protein which is the center of the striatin-interacting phosphatase and kinase (STRIPAK) complexes (PubMed:18782753, PubMed:30622739, PubMed:33633399). STRIPAK complexes have critical roles in protein (de)phosphorylation and are regulators of multiple signaling pathways including Hippo, MAPK, nuclear receptor and cytoskeleton remodeling. Different types of STRIPAK complexes are involved in a variety of biological processes such as cell growth, differentiation, apoptosis, metabolism and immune regulation (Probable).</text>
</comment>
<comment type="subunit">
    <text evidence="7 8 9 10">Tetramerizes (PubMed:33633399). Part of the core of STRIPAK complexes composed of PP2A catalytic and scaffolding subunits, the striatins (PP2A regulatory subunits), the striatin-associated proteins MOB4, STRIP1 and STRIP2, PDCD10 and members of the STE20 kinases, such as STK24 and STK26 (PubMed:18782753, PubMed:30622739, PubMed:33633399). The STRIPAK complex can be extended by adapter proteins such as SLMAP:SIKE1 or CTTNBP2NL (PubMed:30622739). Interacts with CDC42BPB (PubMed:25743393).</text>
</comment>
<comment type="interaction">
    <interactant intactId="EBI-1053857">
        <id>Q13033</id>
    </interactant>
    <interactant intactId="EBI-12026476">
        <id>Q99424</id>
        <label>ACOX2</label>
    </interactant>
    <organismsDiffer>false</organismsDiffer>
    <experiments>2</experiments>
</comment>
<comment type="interaction">
    <interactant intactId="EBI-1053857">
        <id>Q13033</id>
    </interactant>
    <interactant intactId="EBI-1774273">
        <id>Q9P2B4</id>
        <label>CTTNBP2NL</label>
    </interactant>
    <organismsDiffer>false</organismsDiffer>
    <experiments>10</experiments>
</comment>
<comment type="interaction">
    <interactant intactId="EBI-1053857">
        <id>Q13033</id>
    </interactant>
    <interactant intactId="EBI-713946">
        <id>Q9Y3A3-1</id>
        <label>MOB4</label>
    </interactant>
    <organismsDiffer>false</organismsDiffer>
    <experiments>2</experiments>
</comment>
<comment type="interaction">
    <interactant intactId="EBI-1053857">
        <id>Q13033</id>
    </interactant>
    <interactant intactId="EBI-1046642">
        <id>O43815</id>
        <label>STRN</label>
    </interactant>
    <organismsDiffer>false</organismsDiffer>
    <experiments>12</experiments>
</comment>
<comment type="interaction">
    <interactant intactId="EBI-1053857">
        <id>Q13033</id>
    </interactant>
    <interactant intactId="EBI-765817">
        <id>Q9Y228</id>
        <label>TRAF3IP3</label>
    </interactant>
    <organismsDiffer>false</organismsDiffer>
    <experiments>4</experiments>
</comment>
<comment type="interaction">
    <interactant intactId="EBI-1053876">
        <id>Q13033-2</id>
    </interactant>
    <interactant intactId="EBI-746969">
        <id>Q9H0R8</id>
        <label>GABARAPL1</label>
    </interactant>
    <organismsDiffer>false</organismsDiffer>
    <experiments>4</experiments>
</comment>
<comment type="interaction">
    <interactant intactId="EBI-1053876">
        <id>Q13033-2</id>
    </interactant>
    <interactant intactId="EBI-8561769">
        <id>Q5SUL5</id>
        <label>HLA-A</label>
    </interactant>
    <organismsDiffer>false</organismsDiffer>
    <experiments>3</experiments>
</comment>
<comment type="interaction">
    <interactant intactId="EBI-1053876">
        <id>Q13033-2</id>
    </interactant>
    <interactant intactId="EBI-399080">
        <id>Q92993</id>
        <label>KAT5</label>
    </interactant>
    <organismsDiffer>false</organismsDiffer>
    <experiments>3</experiments>
</comment>
<comment type="interaction">
    <interactant intactId="EBI-1053876">
        <id>Q13033-2</id>
    </interactant>
    <interactant intactId="EBI-11742507">
        <id>Q8TAP4-4</id>
        <label>LMO3</label>
    </interactant>
    <organismsDiffer>false</organismsDiffer>
    <experiments>3</experiments>
</comment>
<comment type="interaction">
    <interactant intactId="EBI-1053876">
        <id>Q13033-2</id>
    </interactant>
    <interactant intactId="EBI-713935">
        <id>Q9Y3A3</id>
        <label>MOB4</label>
    </interactant>
    <organismsDiffer>false</organismsDiffer>
    <experiments>4</experiments>
</comment>
<comment type="interaction">
    <interactant intactId="EBI-1053876">
        <id>Q13033-2</id>
    </interactant>
    <interactant intactId="EBI-25884072">
        <id>P62937-2</id>
        <label>PPIA</label>
    </interactant>
    <organismsDiffer>false</organismsDiffer>
    <experiments>3</experiments>
</comment>
<comment type="interaction">
    <interactant intactId="EBI-1053876">
        <id>Q13033-2</id>
    </interactant>
    <interactant intactId="EBI-302388">
        <id>P30153</id>
        <label>PPP2R1A</label>
    </interactant>
    <organismsDiffer>false</organismsDiffer>
    <experiments>9</experiments>
</comment>
<comment type="interaction">
    <interactant intactId="EBI-1053876">
        <id>Q13033-2</id>
    </interactant>
    <interactant intactId="EBI-9090795">
        <id>Q15047-2</id>
        <label>SETDB1</label>
    </interactant>
    <organismsDiffer>false</organismsDiffer>
    <experiments>3</experiments>
</comment>
<comment type="interaction">
    <interactant intactId="EBI-1053876">
        <id>Q13033-2</id>
    </interactant>
    <interactant intactId="EBI-1773646">
        <id>Q9BRV8</id>
        <label>SIKE1</label>
    </interactant>
    <organismsDiffer>false</organismsDiffer>
    <experiments>4</experiments>
</comment>
<comment type="interaction">
    <interactant intactId="EBI-1053876">
        <id>Q13033-2</id>
    </interactant>
    <interactant intactId="EBI-11955057">
        <id>Q8N8B7-2</id>
        <label>TCEANC</label>
    </interactant>
    <organismsDiffer>false</organismsDiffer>
    <experiments>3</experiments>
</comment>
<comment type="interaction">
    <interactant intactId="EBI-1053876">
        <id>Q13033-2</id>
    </interactant>
    <interactant intactId="EBI-359832">
        <id>P61981</id>
        <label>YWHAG</label>
    </interactant>
    <organismsDiffer>false</organismsDiffer>
    <experiments>3</experiments>
</comment>
<comment type="subcellular location">
    <subcellularLocation>
        <location evidence="16">Cytoplasm</location>
    </subcellularLocation>
    <subcellularLocation>
        <location evidence="1">Membrane</location>
        <topology evidence="1">Peripheral membrane protein</topology>
    </subcellularLocation>
</comment>
<comment type="alternative products">
    <event type="alternative splicing"/>
    <isoform>
        <id>Q13033-1</id>
        <name>Beta</name>
        <sequence type="displayed"/>
    </isoform>
    <isoform>
        <id>Q13033-2</id>
        <name>Alpha</name>
        <sequence type="described" ref="VSP_006786"/>
    </isoform>
    <text>Additional isoforms seem to exist.</text>
</comment>
<comment type="similarity">
    <text evidence="15">Belongs to the WD repeat striatin family.</text>
</comment>
<comment type="caution">
    <text evidence="18">Was originally thought to be nuclear.</text>
</comment>
<reference key="1">
    <citation type="journal article" date="1995" name="Biochem. Biophys. Res. Commun.">
        <title>A cell-cycle nuclear autoantigen containing WD-40 motifs expressed mainly in S and G2 phase cells.</title>
        <authorList>
            <person name="Muro Y."/>
            <person name="Chan E.K."/>
            <person name="Landberg G."/>
            <person name="Tan E.M."/>
        </authorList>
    </citation>
    <scope>NUCLEOTIDE SEQUENCE [MRNA] (ISOFORM ALPHA)</scope>
    <scope>VARIANT SER-471</scope>
    <source>
        <tissue>Liver</tissue>
    </source>
</reference>
<reference key="2">
    <citation type="journal article" date="2004" name="Nat. Genet.">
        <title>Complete sequencing and characterization of 21,243 full-length human cDNAs.</title>
        <authorList>
            <person name="Ota T."/>
            <person name="Suzuki Y."/>
            <person name="Nishikawa T."/>
            <person name="Otsuki T."/>
            <person name="Sugiyama T."/>
            <person name="Irie R."/>
            <person name="Wakamatsu A."/>
            <person name="Hayashi K."/>
            <person name="Sato H."/>
            <person name="Nagai K."/>
            <person name="Kimura K."/>
            <person name="Makita H."/>
            <person name="Sekine M."/>
            <person name="Obayashi M."/>
            <person name="Nishi T."/>
            <person name="Shibahara T."/>
            <person name="Tanaka T."/>
            <person name="Ishii S."/>
            <person name="Yamamoto J."/>
            <person name="Saito K."/>
            <person name="Kawai Y."/>
            <person name="Isono Y."/>
            <person name="Nakamura Y."/>
            <person name="Nagahari K."/>
            <person name="Murakami K."/>
            <person name="Yasuda T."/>
            <person name="Iwayanagi T."/>
            <person name="Wagatsuma M."/>
            <person name="Shiratori A."/>
            <person name="Sudo H."/>
            <person name="Hosoiri T."/>
            <person name="Kaku Y."/>
            <person name="Kodaira H."/>
            <person name="Kondo H."/>
            <person name="Sugawara M."/>
            <person name="Takahashi M."/>
            <person name="Kanda K."/>
            <person name="Yokoi T."/>
            <person name="Furuya T."/>
            <person name="Kikkawa E."/>
            <person name="Omura Y."/>
            <person name="Abe K."/>
            <person name="Kamihara K."/>
            <person name="Katsuta N."/>
            <person name="Sato K."/>
            <person name="Tanikawa M."/>
            <person name="Yamazaki M."/>
            <person name="Ninomiya K."/>
            <person name="Ishibashi T."/>
            <person name="Yamashita H."/>
            <person name="Murakawa K."/>
            <person name="Fujimori K."/>
            <person name="Tanai H."/>
            <person name="Kimata M."/>
            <person name="Watanabe M."/>
            <person name="Hiraoka S."/>
            <person name="Chiba Y."/>
            <person name="Ishida S."/>
            <person name="Ono Y."/>
            <person name="Takiguchi S."/>
            <person name="Watanabe S."/>
            <person name="Yosida M."/>
            <person name="Hotuta T."/>
            <person name="Kusano J."/>
            <person name="Kanehori K."/>
            <person name="Takahashi-Fujii A."/>
            <person name="Hara H."/>
            <person name="Tanase T.-O."/>
            <person name="Nomura Y."/>
            <person name="Togiya S."/>
            <person name="Komai F."/>
            <person name="Hara R."/>
            <person name="Takeuchi K."/>
            <person name="Arita M."/>
            <person name="Imose N."/>
            <person name="Musashino K."/>
            <person name="Yuuki H."/>
            <person name="Oshima A."/>
            <person name="Sasaki N."/>
            <person name="Aotsuka S."/>
            <person name="Yoshikawa Y."/>
            <person name="Matsunawa H."/>
            <person name="Ichihara T."/>
            <person name="Shiohata N."/>
            <person name="Sano S."/>
            <person name="Moriya S."/>
            <person name="Momiyama H."/>
            <person name="Satoh N."/>
            <person name="Takami S."/>
            <person name="Terashima Y."/>
            <person name="Suzuki O."/>
            <person name="Nakagawa S."/>
            <person name="Senoh A."/>
            <person name="Mizoguchi H."/>
            <person name="Goto Y."/>
            <person name="Shimizu F."/>
            <person name="Wakebe H."/>
            <person name="Hishigaki H."/>
            <person name="Watanabe T."/>
            <person name="Sugiyama A."/>
            <person name="Takemoto M."/>
            <person name="Kawakami B."/>
            <person name="Yamazaki M."/>
            <person name="Watanabe K."/>
            <person name="Kumagai A."/>
            <person name="Itakura S."/>
            <person name="Fukuzumi Y."/>
            <person name="Fujimori Y."/>
            <person name="Komiyama M."/>
            <person name="Tashiro H."/>
            <person name="Tanigami A."/>
            <person name="Fujiwara T."/>
            <person name="Ono T."/>
            <person name="Yamada K."/>
            <person name="Fujii Y."/>
            <person name="Ozaki K."/>
            <person name="Hirao M."/>
            <person name="Ohmori Y."/>
            <person name="Kawabata A."/>
            <person name="Hikiji T."/>
            <person name="Kobatake N."/>
            <person name="Inagaki H."/>
            <person name="Ikema Y."/>
            <person name="Okamoto S."/>
            <person name="Okitani R."/>
            <person name="Kawakami T."/>
            <person name="Noguchi S."/>
            <person name="Itoh T."/>
            <person name="Shigeta K."/>
            <person name="Senba T."/>
            <person name="Matsumura K."/>
            <person name="Nakajima Y."/>
            <person name="Mizuno T."/>
            <person name="Morinaga M."/>
            <person name="Sasaki M."/>
            <person name="Togashi T."/>
            <person name="Oyama M."/>
            <person name="Hata H."/>
            <person name="Watanabe M."/>
            <person name="Komatsu T."/>
            <person name="Mizushima-Sugano J."/>
            <person name="Satoh T."/>
            <person name="Shirai Y."/>
            <person name="Takahashi Y."/>
            <person name="Nakagawa K."/>
            <person name="Okumura K."/>
            <person name="Nagase T."/>
            <person name="Nomura N."/>
            <person name="Kikuchi H."/>
            <person name="Masuho Y."/>
            <person name="Yamashita R."/>
            <person name="Nakai K."/>
            <person name="Yada T."/>
            <person name="Nakamura Y."/>
            <person name="Ohara O."/>
            <person name="Isogai T."/>
            <person name="Sugano S."/>
        </authorList>
    </citation>
    <scope>NUCLEOTIDE SEQUENCE [LARGE SCALE MRNA] (ISOFORM ALPHA)</scope>
    <source>
        <tissue>Trachea</tissue>
    </source>
</reference>
<reference key="3">
    <citation type="journal article" date="2003" name="Nature">
        <title>The DNA sequence and analysis of human chromosome 14.</title>
        <authorList>
            <person name="Heilig R."/>
            <person name="Eckenberg R."/>
            <person name="Petit J.-L."/>
            <person name="Fonknechten N."/>
            <person name="Da Silva C."/>
            <person name="Cattolico L."/>
            <person name="Levy M."/>
            <person name="Barbe V."/>
            <person name="De Berardinis V."/>
            <person name="Ureta-Vidal A."/>
            <person name="Pelletier E."/>
            <person name="Vico V."/>
            <person name="Anthouard V."/>
            <person name="Rowen L."/>
            <person name="Madan A."/>
            <person name="Qin S."/>
            <person name="Sun H."/>
            <person name="Du H."/>
            <person name="Pepin K."/>
            <person name="Artiguenave F."/>
            <person name="Robert C."/>
            <person name="Cruaud C."/>
            <person name="Bruels T."/>
            <person name="Jaillon O."/>
            <person name="Friedlander L."/>
            <person name="Samson G."/>
            <person name="Brottier P."/>
            <person name="Cure S."/>
            <person name="Segurens B."/>
            <person name="Aniere F."/>
            <person name="Samain S."/>
            <person name="Crespeau H."/>
            <person name="Abbasi N."/>
            <person name="Aiach N."/>
            <person name="Boscus D."/>
            <person name="Dickhoff R."/>
            <person name="Dors M."/>
            <person name="Dubois I."/>
            <person name="Friedman C."/>
            <person name="Gouyvenoux M."/>
            <person name="James R."/>
            <person name="Madan A."/>
            <person name="Mairey-Estrada B."/>
            <person name="Mangenot S."/>
            <person name="Martins N."/>
            <person name="Menard M."/>
            <person name="Oztas S."/>
            <person name="Ratcliffe A."/>
            <person name="Shaffer T."/>
            <person name="Trask B."/>
            <person name="Vacherie B."/>
            <person name="Bellemere C."/>
            <person name="Belser C."/>
            <person name="Besnard-Gonnet M."/>
            <person name="Bartol-Mavel D."/>
            <person name="Boutard M."/>
            <person name="Briez-Silla S."/>
            <person name="Combette S."/>
            <person name="Dufosse-Laurent V."/>
            <person name="Ferron C."/>
            <person name="Lechaplais C."/>
            <person name="Louesse C."/>
            <person name="Muselet D."/>
            <person name="Magdelenat G."/>
            <person name="Pateau E."/>
            <person name="Petit E."/>
            <person name="Sirvain-Trukniewicz P."/>
            <person name="Trybou A."/>
            <person name="Vega-Czarny N."/>
            <person name="Bataille E."/>
            <person name="Bluet E."/>
            <person name="Bordelais I."/>
            <person name="Dubois M."/>
            <person name="Dumont C."/>
            <person name="Guerin T."/>
            <person name="Haffray S."/>
            <person name="Hammadi R."/>
            <person name="Muanga J."/>
            <person name="Pellouin V."/>
            <person name="Robert D."/>
            <person name="Wunderle E."/>
            <person name="Gauguet G."/>
            <person name="Roy A."/>
            <person name="Sainte-Marthe L."/>
            <person name="Verdier J."/>
            <person name="Verdier-Discala C."/>
            <person name="Hillier L.W."/>
            <person name="Fulton L."/>
            <person name="McPherson J."/>
            <person name="Matsuda F."/>
            <person name="Wilson R."/>
            <person name="Scarpelli C."/>
            <person name="Gyapay G."/>
            <person name="Wincker P."/>
            <person name="Saurin W."/>
            <person name="Quetier F."/>
            <person name="Waterston R."/>
            <person name="Hood L."/>
            <person name="Weissenbach J."/>
        </authorList>
    </citation>
    <scope>NUCLEOTIDE SEQUENCE [LARGE SCALE GENOMIC DNA]</scope>
</reference>
<reference key="4">
    <citation type="journal article" date="2004" name="Genome Res.">
        <title>The status, quality, and expansion of the NIH full-length cDNA project: the Mammalian Gene Collection (MGC).</title>
        <authorList>
            <consortium name="The MGC Project Team"/>
        </authorList>
    </citation>
    <scope>NUCLEOTIDE SEQUENCE [LARGE SCALE MRNA] (ISOFORM ALPHA)</scope>
    <source>
        <tissue>Brain</tissue>
    </source>
</reference>
<reference key="5">
    <citation type="journal article" date="2000" name="J. Biol. Chem.">
        <title>Zinedin, SG2NA, and striatin are calmodulin-binding, WD repeat proteins principally expressed in the brain.</title>
        <authorList>
            <person name="Castets F."/>
            <person name="Rakitina T."/>
            <person name="Gaillard S."/>
            <person name="Moqrich A."/>
            <person name="Mattei M.-G."/>
            <person name="Monneron A."/>
        </authorList>
    </citation>
    <scope>NUCLEOTIDE SEQUENCE [MRNA] OF 120-797 (ISOFORM BETA)</scope>
    <scope>VARIANT SER-471</scope>
</reference>
<reference key="6">
    <citation type="journal article" date="2006" name="Nat. Biotechnol.">
        <title>A probability-based approach for high-throughput protein phosphorylation analysis and site localization.</title>
        <authorList>
            <person name="Beausoleil S.A."/>
            <person name="Villen J."/>
            <person name="Gerber S.A."/>
            <person name="Rush J."/>
            <person name="Gygi S.P."/>
        </authorList>
    </citation>
    <scope>PHOSPHORYLATION [LARGE SCALE ANALYSIS] AT SER-229</scope>
    <scope>IDENTIFICATION BY MASS SPECTROMETRY [LARGE SCALE ANALYSIS]</scope>
    <source>
        <tissue>Cervix carcinoma</tissue>
    </source>
</reference>
<reference key="7">
    <citation type="journal article" date="2008" name="Proc. Natl. Acad. Sci. U.S.A.">
        <title>A quantitative atlas of mitotic phosphorylation.</title>
        <authorList>
            <person name="Dephoure N."/>
            <person name="Zhou C."/>
            <person name="Villen J."/>
            <person name="Beausoleil S.A."/>
            <person name="Bakalarski C.E."/>
            <person name="Elledge S.J."/>
            <person name="Gygi S.P."/>
        </authorList>
    </citation>
    <scope>PHOSPHORYLATION [LARGE SCALE ANALYSIS] AT SER-257</scope>
    <scope>IDENTIFICATION BY MASS SPECTROMETRY [LARGE SCALE ANALYSIS]</scope>
    <source>
        <tissue>Cervix carcinoma</tissue>
    </source>
</reference>
<reference key="8">
    <citation type="journal article" date="2009" name="Anal. Chem.">
        <title>Lys-N and trypsin cover complementary parts of the phosphoproteome in a refined SCX-based approach.</title>
        <authorList>
            <person name="Gauci S."/>
            <person name="Helbig A.O."/>
            <person name="Slijper M."/>
            <person name="Krijgsveld J."/>
            <person name="Heck A.J."/>
            <person name="Mohammed S."/>
        </authorList>
    </citation>
    <scope>IDENTIFICATION BY MASS SPECTROMETRY [LARGE SCALE ANALYSIS]</scope>
</reference>
<reference key="9">
    <citation type="journal article" date="2009" name="Mol. Cell. Proteomics">
        <title>A PP2A phosphatase high density interaction network identifies a novel striatin-interacting phosphatase and kinase complex linked to the cerebral cavernous malformation 3 (CCM3) protein.</title>
        <authorList>
            <person name="Goudreault M."/>
            <person name="D'Ambrosio L.M."/>
            <person name="Kean M.J."/>
            <person name="Mullin M.J."/>
            <person name="Larsen B.G."/>
            <person name="Sanchez A."/>
            <person name="Chaudhry S."/>
            <person name="Chen G.I."/>
            <person name="Sicheri F."/>
            <person name="Nesvizhskii A.I."/>
            <person name="Aebersold R."/>
            <person name="Raught B."/>
            <person name="Gingras A.C."/>
        </authorList>
    </citation>
    <scope>IDENTIFICATION IN STRIPAK COMPLEX</scope>
    <scope>FUNCTION</scope>
    <scope>SUBCELLULAR LOCATION</scope>
</reference>
<reference key="10">
    <citation type="journal article" date="2009" name="Sci. Signal.">
        <title>Quantitative phosphoproteomic analysis of T cell receptor signaling reveals system-wide modulation of protein-protein interactions.</title>
        <authorList>
            <person name="Mayya V."/>
            <person name="Lundgren D.H."/>
            <person name="Hwang S.-I."/>
            <person name="Rezaul K."/>
            <person name="Wu L."/>
            <person name="Eng J.K."/>
            <person name="Rodionov V."/>
            <person name="Han D.K."/>
        </authorList>
    </citation>
    <scope>PHOSPHORYLATION [LARGE SCALE ANALYSIS] AT SER-229 AND SER-257</scope>
    <scope>IDENTIFICATION BY MASS SPECTROMETRY [LARGE SCALE ANALYSIS]</scope>
    <source>
        <tissue>Leukemic T-cell</tissue>
    </source>
</reference>
<reference key="11">
    <citation type="journal article" date="2010" name="Sci. Signal.">
        <title>Quantitative phosphoproteomics reveals widespread full phosphorylation site occupancy during mitosis.</title>
        <authorList>
            <person name="Olsen J.V."/>
            <person name="Vermeulen M."/>
            <person name="Santamaria A."/>
            <person name="Kumar C."/>
            <person name="Miller M.L."/>
            <person name="Jensen L.J."/>
            <person name="Gnad F."/>
            <person name="Cox J."/>
            <person name="Jensen T.S."/>
            <person name="Nigg E.A."/>
            <person name="Brunak S."/>
            <person name="Mann M."/>
        </authorList>
    </citation>
    <scope>PHOSPHORYLATION [LARGE SCALE ANALYSIS] AT SER-229</scope>
    <scope>IDENTIFICATION BY MASS SPECTROMETRY [LARGE SCALE ANALYSIS]</scope>
    <source>
        <tissue>Cervix carcinoma</tissue>
    </source>
</reference>
<reference key="12">
    <citation type="journal article" date="2011" name="BMC Syst. Biol.">
        <title>Initial characterization of the human central proteome.</title>
        <authorList>
            <person name="Burkard T.R."/>
            <person name="Planyavsky M."/>
            <person name="Kaupe I."/>
            <person name="Breitwieser F.P."/>
            <person name="Buerckstuemmer T."/>
            <person name="Bennett K.L."/>
            <person name="Superti-Furga G."/>
            <person name="Colinge J."/>
        </authorList>
    </citation>
    <scope>IDENTIFICATION BY MASS SPECTROMETRY [LARGE SCALE ANALYSIS]</scope>
</reference>
<reference key="13">
    <citation type="journal article" date="2011" name="Sci. Signal.">
        <title>System-wide temporal characterization of the proteome and phosphoproteome of human embryonic stem cell differentiation.</title>
        <authorList>
            <person name="Rigbolt K.T."/>
            <person name="Prokhorova T.A."/>
            <person name="Akimov V."/>
            <person name="Henningsen J."/>
            <person name="Johansen P.T."/>
            <person name="Kratchmarova I."/>
            <person name="Kassem M."/>
            <person name="Mann M."/>
            <person name="Olsen J.V."/>
            <person name="Blagoev B."/>
        </authorList>
    </citation>
    <scope>PHOSPHORYLATION [LARGE SCALE ANALYSIS] AT SER-229</scope>
    <scope>IDENTIFICATION BY MASS SPECTROMETRY [LARGE SCALE ANALYSIS]</scope>
</reference>
<reference key="14">
    <citation type="journal article" date="2012" name="Mol. Cell. Proteomics">
        <title>Comparative large-scale characterisation of plant vs. mammal proteins reveals similar and idiosyncratic N-alpha acetylation features.</title>
        <authorList>
            <person name="Bienvenut W.V."/>
            <person name="Sumpton D."/>
            <person name="Martinez A."/>
            <person name="Lilla S."/>
            <person name="Espagne C."/>
            <person name="Meinnel T."/>
            <person name="Giglione C."/>
        </authorList>
    </citation>
    <scope>ACETYLATION [LARGE SCALE ANALYSIS] AT MET-1</scope>
    <scope>IDENTIFICATION BY MASS SPECTROMETRY [LARGE SCALE ANALYSIS]</scope>
</reference>
<reference key="15">
    <citation type="journal article" date="2012" name="Proc. Natl. Acad. Sci. U.S.A.">
        <title>N-terminal acetylome analyses and functional insights of the N-terminal acetyltransferase NatB.</title>
        <authorList>
            <person name="Van Damme P."/>
            <person name="Lasa M."/>
            <person name="Polevoda B."/>
            <person name="Gazquez C."/>
            <person name="Elosegui-Artola A."/>
            <person name="Kim D.S."/>
            <person name="De Juan-Pardo E."/>
            <person name="Demeyer K."/>
            <person name="Hole K."/>
            <person name="Larrea E."/>
            <person name="Timmerman E."/>
            <person name="Prieto J."/>
            <person name="Arnesen T."/>
            <person name="Sherman F."/>
            <person name="Gevaert K."/>
            <person name="Aldabe R."/>
        </authorList>
    </citation>
    <scope>ACETYLATION [LARGE SCALE ANALYSIS] AT MET-1</scope>
    <scope>IDENTIFICATION BY MASS SPECTROMETRY [LARGE SCALE ANALYSIS]</scope>
</reference>
<reference key="16">
    <citation type="journal article" date="2013" name="J. Proteome Res.">
        <title>Toward a comprehensive characterization of a human cancer cell phosphoproteome.</title>
        <authorList>
            <person name="Zhou H."/>
            <person name="Di Palma S."/>
            <person name="Preisinger C."/>
            <person name="Peng M."/>
            <person name="Polat A.N."/>
            <person name="Heck A.J."/>
            <person name="Mohammed S."/>
        </authorList>
    </citation>
    <scope>PHOSPHORYLATION [LARGE SCALE ANALYSIS] AT SER-214 AND SER-229</scope>
    <scope>IDENTIFICATION BY MASS SPECTROMETRY [LARGE SCALE ANALYSIS]</scope>
    <source>
        <tissue>Cervix carcinoma</tissue>
        <tissue>Erythroleukemia</tissue>
    </source>
</reference>
<reference key="17">
    <citation type="journal article" date="2014" name="J. Proteomics">
        <title>An enzyme assisted RP-RPLC approach for in-depth analysis of human liver phosphoproteome.</title>
        <authorList>
            <person name="Bian Y."/>
            <person name="Song C."/>
            <person name="Cheng K."/>
            <person name="Dong M."/>
            <person name="Wang F."/>
            <person name="Huang J."/>
            <person name="Sun D."/>
            <person name="Wang L."/>
            <person name="Ye M."/>
            <person name="Zou H."/>
        </authorList>
    </citation>
    <scope>PHOSPHORYLATION [LARGE SCALE ANALYSIS] AT SER-257</scope>
    <scope>IDENTIFICATION BY MASS SPECTROMETRY [LARGE SCALE ANALYSIS]</scope>
    <source>
        <tissue>Liver</tissue>
    </source>
</reference>
<reference key="18">
    <citation type="journal article" date="2015" name="Nat. Commun.">
        <title>CCM-3/STRIPAK promotes seamless tube extension through endocytic recycling.</title>
        <authorList>
            <person name="Lant B."/>
            <person name="Yu B."/>
            <person name="Goudreault M."/>
            <person name="Holmyard D."/>
            <person name="Knight J.D."/>
            <person name="Xu P."/>
            <person name="Zhao L."/>
            <person name="Chin K."/>
            <person name="Wallace E."/>
            <person name="Zhen M."/>
            <person name="Gingras A.C."/>
            <person name="Derry W.B."/>
        </authorList>
    </citation>
    <scope>INTERACTION WITH STRP1; CDC42BPB AND SIKE1</scope>
</reference>
<reference key="19">
    <citation type="journal article" date="2016" name="Oncogene">
        <title>STRIPAK complexes in cell signaling and cancer.</title>
        <authorList>
            <person name="Shi Z."/>
            <person name="Jiao S."/>
            <person name="Zhou Z."/>
        </authorList>
    </citation>
    <scope>REVIEW OF FUNCTION</scope>
</reference>
<reference evidence="20" key="20">
    <citation type="journal article" date="2019" name="Cell Discov.">
        <title>Architecture, substructures, and dynamic assembly of STRIPAK complexes in Hippo signaling.</title>
        <authorList>
            <person name="Tang Y."/>
            <person name="Chen M."/>
            <person name="Zhou L."/>
            <person name="Ma J."/>
            <person name="Li Y."/>
            <person name="Zhang H."/>
            <person name="Shi Z."/>
            <person name="Xu Q."/>
            <person name="Zhang X."/>
            <person name="Gao Z."/>
            <person name="Zhao Y."/>
            <person name="Cheng Y."/>
            <person name="Jiao S."/>
            <person name="Zhou Z."/>
        </authorList>
    </citation>
    <scope>X-RAY CRYSTALLOGRAPHY (1.75 ANGSTROMS) OF 165-190 IN COMPLEX WITH SLMAP</scope>
    <scope>IDENTIFICATION IN THE STRIPAK COMPLEX</scope>
    <scope>FUNCTION</scope>
    <scope>MUTAGENESIS OF 176-ARG--GLU-185 AND 179-LEU--VAL-186</scope>
</reference>
<reference evidence="21" key="21">
    <citation type="journal article" date="2021" name="Nat. Struct. Mol. Biol.">
        <title>Cryo-EM structure of the Hippo signaling integrator human STRIPAK.</title>
        <authorList>
            <person name="Jeong B.C."/>
            <person name="Bae S.J."/>
            <person name="Ni L."/>
            <person name="Zhang X."/>
            <person name="Bai X.C."/>
            <person name="Luo X."/>
        </authorList>
    </citation>
    <scope>STRUCTURE BY ELECTRON MICROSCOPY (3.30 ANGSTROMS) IN THE STRIPAK COMPLEX</scope>
    <scope>SUBUNIT</scope>
    <scope>FUNCTION</scope>
    <scope>MUTAGENESIS OF ARG-530</scope>
</reference>